<reference key="1">
    <citation type="journal article" date="2010" name="BMC Genomics">
        <title>Complete genome sequence and lifestyle of black-pigmented Corynebacterium aurimucosum ATCC 700975 (formerly C. nigricans CN-1) isolated from a vaginal swab of a woman with spontaneous abortion.</title>
        <authorList>
            <person name="Trost E."/>
            <person name="Gotker S."/>
            <person name="Schneider J."/>
            <person name="Schneiker-Bekel S."/>
            <person name="Szczepanowski R."/>
            <person name="Tilker A."/>
            <person name="Viehoever P."/>
            <person name="Arnold W."/>
            <person name="Bekel T."/>
            <person name="Blom J."/>
            <person name="Gartemann K.H."/>
            <person name="Linke B."/>
            <person name="Goesmann A."/>
            <person name="Puhler A."/>
            <person name="Shukla S.K."/>
            <person name="Tauch A."/>
        </authorList>
    </citation>
    <scope>NUCLEOTIDE SEQUENCE [LARGE SCALE GENOMIC DNA]</scope>
    <source>
        <strain>ATCC 700975 / DSM 44827 / CIP 107346 / CN-1</strain>
    </source>
</reference>
<proteinExistence type="inferred from homology"/>
<evidence type="ECO:0000255" key="1">
    <source>
        <dbReference type="HAMAP-Rule" id="MF_00360"/>
    </source>
</evidence>
<evidence type="ECO:0000305" key="2"/>
<comment type="function">
    <text evidence="1">Binds together with bS18 to 16S ribosomal RNA.</text>
</comment>
<comment type="similarity">
    <text evidence="1">Belongs to the bacterial ribosomal protein bS6 family.</text>
</comment>
<protein>
    <recommendedName>
        <fullName evidence="1">Small ribosomal subunit protein bS6</fullName>
    </recommendedName>
    <alternativeName>
        <fullName evidence="2">30S ribosomal protein S6</fullName>
    </alternativeName>
</protein>
<feature type="chain" id="PRO_1000133521" description="Small ribosomal subunit protein bS6">
    <location>
        <begin position="1"/>
        <end position="96"/>
    </location>
</feature>
<dbReference type="EMBL" id="CP001601">
    <property type="protein sequence ID" value="ACP34031.1"/>
    <property type="molecule type" value="Genomic_DNA"/>
</dbReference>
<dbReference type="SMR" id="C3PKD0"/>
<dbReference type="STRING" id="548476.cauri_2440"/>
<dbReference type="KEGG" id="car:cauri_2440"/>
<dbReference type="eggNOG" id="COG0360">
    <property type="taxonomic scope" value="Bacteria"/>
</dbReference>
<dbReference type="HOGENOM" id="CLU_113441_5_3_11"/>
<dbReference type="Proteomes" id="UP000002077">
    <property type="component" value="Chromosome"/>
</dbReference>
<dbReference type="GO" id="GO:0005737">
    <property type="term" value="C:cytoplasm"/>
    <property type="evidence" value="ECO:0007669"/>
    <property type="project" value="UniProtKB-ARBA"/>
</dbReference>
<dbReference type="GO" id="GO:1990904">
    <property type="term" value="C:ribonucleoprotein complex"/>
    <property type="evidence" value="ECO:0007669"/>
    <property type="project" value="UniProtKB-KW"/>
</dbReference>
<dbReference type="GO" id="GO:0005840">
    <property type="term" value="C:ribosome"/>
    <property type="evidence" value="ECO:0007669"/>
    <property type="project" value="UniProtKB-KW"/>
</dbReference>
<dbReference type="GO" id="GO:0070181">
    <property type="term" value="F:small ribosomal subunit rRNA binding"/>
    <property type="evidence" value="ECO:0007669"/>
    <property type="project" value="TreeGrafter"/>
</dbReference>
<dbReference type="GO" id="GO:0003735">
    <property type="term" value="F:structural constituent of ribosome"/>
    <property type="evidence" value="ECO:0007669"/>
    <property type="project" value="InterPro"/>
</dbReference>
<dbReference type="GO" id="GO:0006412">
    <property type="term" value="P:translation"/>
    <property type="evidence" value="ECO:0007669"/>
    <property type="project" value="UniProtKB-UniRule"/>
</dbReference>
<dbReference type="CDD" id="cd00473">
    <property type="entry name" value="bS6"/>
    <property type="match status" value="1"/>
</dbReference>
<dbReference type="FunFam" id="3.30.70.60:FF:000002">
    <property type="entry name" value="30S ribosomal protein S6"/>
    <property type="match status" value="1"/>
</dbReference>
<dbReference type="Gene3D" id="3.30.70.60">
    <property type="match status" value="1"/>
</dbReference>
<dbReference type="HAMAP" id="MF_00360">
    <property type="entry name" value="Ribosomal_bS6"/>
    <property type="match status" value="1"/>
</dbReference>
<dbReference type="InterPro" id="IPR000529">
    <property type="entry name" value="Ribosomal_bS6"/>
</dbReference>
<dbReference type="InterPro" id="IPR020815">
    <property type="entry name" value="Ribosomal_bS6_CS"/>
</dbReference>
<dbReference type="InterPro" id="IPR035980">
    <property type="entry name" value="Ribosomal_bS6_sf"/>
</dbReference>
<dbReference type="InterPro" id="IPR020814">
    <property type="entry name" value="Ribosomal_S6_plastid/chlpt"/>
</dbReference>
<dbReference type="InterPro" id="IPR014717">
    <property type="entry name" value="Transl_elong_EF1B/ribsomal_bS6"/>
</dbReference>
<dbReference type="NCBIfam" id="TIGR00166">
    <property type="entry name" value="S6"/>
    <property type="match status" value="1"/>
</dbReference>
<dbReference type="PANTHER" id="PTHR21011">
    <property type="entry name" value="MITOCHONDRIAL 28S RIBOSOMAL PROTEIN S6"/>
    <property type="match status" value="1"/>
</dbReference>
<dbReference type="PANTHER" id="PTHR21011:SF1">
    <property type="entry name" value="SMALL RIBOSOMAL SUBUNIT PROTEIN BS6M"/>
    <property type="match status" value="1"/>
</dbReference>
<dbReference type="Pfam" id="PF01250">
    <property type="entry name" value="Ribosomal_S6"/>
    <property type="match status" value="1"/>
</dbReference>
<dbReference type="SUPFAM" id="SSF54995">
    <property type="entry name" value="Ribosomal protein S6"/>
    <property type="match status" value="1"/>
</dbReference>
<dbReference type="PROSITE" id="PS01048">
    <property type="entry name" value="RIBOSOMAL_S6"/>
    <property type="match status" value="1"/>
</dbReference>
<sequence length="96" mass="11225">MRHYEVMIILDPNQDERTVTPSLDKFLEAIRKDGGKVEKVDVWGKRRLAYPINKKEEGIYAVVELECESHSVLELDRRLNLNDSILRTKVLRTDSK</sequence>
<name>RS6_CORA7</name>
<gene>
    <name evidence="1" type="primary">rpsF</name>
    <name type="ordered locus">cauri_2440</name>
</gene>
<accession>C3PKD0</accession>
<organism>
    <name type="scientific">Corynebacterium aurimucosum (strain ATCC 700975 / DSM 44827 / CIP 107346 / CN-1)</name>
    <name type="common">Corynebacterium nigricans</name>
    <dbReference type="NCBI Taxonomy" id="548476"/>
    <lineage>
        <taxon>Bacteria</taxon>
        <taxon>Bacillati</taxon>
        <taxon>Actinomycetota</taxon>
        <taxon>Actinomycetes</taxon>
        <taxon>Mycobacteriales</taxon>
        <taxon>Corynebacteriaceae</taxon>
        <taxon>Corynebacterium</taxon>
    </lineage>
</organism>
<keyword id="KW-1185">Reference proteome</keyword>
<keyword id="KW-0687">Ribonucleoprotein</keyword>
<keyword id="KW-0689">Ribosomal protein</keyword>
<keyword id="KW-0694">RNA-binding</keyword>
<keyword id="KW-0699">rRNA-binding</keyword>